<organism>
    <name type="scientific">Elusimicrobium minutum (strain Pei191)</name>
    <dbReference type="NCBI Taxonomy" id="445932"/>
    <lineage>
        <taxon>Bacteria</taxon>
        <taxon>Pseudomonadati</taxon>
        <taxon>Elusimicrobiota</taxon>
        <taxon>Elusimicrobia</taxon>
        <taxon>Elusimicrobiales</taxon>
        <taxon>Elusimicrobiaceae</taxon>
        <taxon>Elusimicrobium</taxon>
    </lineage>
</organism>
<evidence type="ECO:0000255" key="1">
    <source>
        <dbReference type="HAMAP-Rule" id="MF_00332"/>
    </source>
</evidence>
<evidence type="ECO:0000256" key="2">
    <source>
        <dbReference type="SAM" id="MobiDB-lite"/>
    </source>
</evidence>
<dbReference type="EMBL" id="CP001055">
    <property type="protein sequence ID" value="ACC97666.1"/>
    <property type="molecule type" value="Genomic_DNA"/>
</dbReference>
<dbReference type="RefSeq" id="WP_012414281.1">
    <property type="nucleotide sequence ID" value="NC_010644.1"/>
</dbReference>
<dbReference type="SMR" id="B2KAX0"/>
<dbReference type="STRING" id="445932.Emin_0100"/>
<dbReference type="KEGG" id="emi:Emin_0100"/>
<dbReference type="HOGENOM" id="CLU_005965_2_4_0"/>
<dbReference type="OrthoDB" id="9766019at2"/>
<dbReference type="Proteomes" id="UP000001029">
    <property type="component" value="Chromosome"/>
</dbReference>
<dbReference type="GO" id="GO:0005524">
    <property type="term" value="F:ATP binding"/>
    <property type="evidence" value="ECO:0007669"/>
    <property type="project" value="UniProtKB-UniRule"/>
</dbReference>
<dbReference type="GO" id="GO:0140662">
    <property type="term" value="F:ATP-dependent protein folding chaperone"/>
    <property type="evidence" value="ECO:0007669"/>
    <property type="project" value="InterPro"/>
</dbReference>
<dbReference type="GO" id="GO:0051082">
    <property type="term" value="F:unfolded protein binding"/>
    <property type="evidence" value="ECO:0007669"/>
    <property type="project" value="InterPro"/>
</dbReference>
<dbReference type="CDD" id="cd10234">
    <property type="entry name" value="ASKHA_NBD_HSP70_DnaK-like"/>
    <property type="match status" value="1"/>
</dbReference>
<dbReference type="FunFam" id="2.60.34.10:FF:000014">
    <property type="entry name" value="Chaperone protein DnaK HSP70"/>
    <property type="match status" value="1"/>
</dbReference>
<dbReference type="FunFam" id="1.20.1270.10:FF:000001">
    <property type="entry name" value="Molecular chaperone DnaK"/>
    <property type="match status" value="1"/>
</dbReference>
<dbReference type="FunFam" id="3.30.420.40:FF:000071">
    <property type="entry name" value="Molecular chaperone DnaK"/>
    <property type="match status" value="1"/>
</dbReference>
<dbReference type="FunFam" id="3.90.640.10:FF:000003">
    <property type="entry name" value="Molecular chaperone DnaK"/>
    <property type="match status" value="1"/>
</dbReference>
<dbReference type="Gene3D" id="1.20.1270.10">
    <property type="match status" value="1"/>
</dbReference>
<dbReference type="Gene3D" id="3.30.420.40">
    <property type="match status" value="2"/>
</dbReference>
<dbReference type="Gene3D" id="3.90.640.10">
    <property type="entry name" value="Actin, Chain A, domain 4"/>
    <property type="match status" value="1"/>
</dbReference>
<dbReference type="Gene3D" id="2.60.34.10">
    <property type="entry name" value="Substrate Binding Domain Of DNAk, Chain A, domain 1"/>
    <property type="match status" value="1"/>
</dbReference>
<dbReference type="HAMAP" id="MF_00332">
    <property type="entry name" value="DnaK"/>
    <property type="match status" value="1"/>
</dbReference>
<dbReference type="InterPro" id="IPR043129">
    <property type="entry name" value="ATPase_NBD"/>
</dbReference>
<dbReference type="InterPro" id="IPR012725">
    <property type="entry name" value="Chaperone_DnaK"/>
</dbReference>
<dbReference type="InterPro" id="IPR018181">
    <property type="entry name" value="Heat_shock_70_CS"/>
</dbReference>
<dbReference type="InterPro" id="IPR029048">
    <property type="entry name" value="HSP70_C_sf"/>
</dbReference>
<dbReference type="InterPro" id="IPR029047">
    <property type="entry name" value="HSP70_peptide-bd_sf"/>
</dbReference>
<dbReference type="InterPro" id="IPR013126">
    <property type="entry name" value="Hsp_70_fam"/>
</dbReference>
<dbReference type="NCBIfam" id="NF001413">
    <property type="entry name" value="PRK00290.1"/>
    <property type="match status" value="1"/>
</dbReference>
<dbReference type="NCBIfam" id="TIGR02350">
    <property type="entry name" value="prok_dnaK"/>
    <property type="match status" value="1"/>
</dbReference>
<dbReference type="PANTHER" id="PTHR19375">
    <property type="entry name" value="HEAT SHOCK PROTEIN 70KDA"/>
    <property type="match status" value="1"/>
</dbReference>
<dbReference type="Pfam" id="PF00012">
    <property type="entry name" value="HSP70"/>
    <property type="match status" value="2"/>
</dbReference>
<dbReference type="PRINTS" id="PR00301">
    <property type="entry name" value="HEATSHOCK70"/>
</dbReference>
<dbReference type="SUPFAM" id="SSF53067">
    <property type="entry name" value="Actin-like ATPase domain"/>
    <property type="match status" value="2"/>
</dbReference>
<dbReference type="SUPFAM" id="SSF100934">
    <property type="entry name" value="Heat shock protein 70kD (HSP70), C-terminal subdomain"/>
    <property type="match status" value="1"/>
</dbReference>
<dbReference type="SUPFAM" id="SSF100920">
    <property type="entry name" value="Heat shock protein 70kD (HSP70), peptide-binding domain"/>
    <property type="match status" value="1"/>
</dbReference>
<dbReference type="PROSITE" id="PS00329">
    <property type="entry name" value="HSP70_2"/>
    <property type="match status" value="1"/>
</dbReference>
<dbReference type="PROSITE" id="PS01036">
    <property type="entry name" value="HSP70_3"/>
    <property type="match status" value="1"/>
</dbReference>
<keyword id="KW-0067">ATP-binding</keyword>
<keyword id="KW-0143">Chaperone</keyword>
<keyword id="KW-0547">Nucleotide-binding</keyword>
<keyword id="KW-0597">Phosphoprotein</keyword>
<keyword id="KW-1185">Reference proteome</keyword>
<keyword id="KW-0346">Stress response</keyword>
<accession>B2KAX0</accession>
<protein>
    <recommendedName>
        <fullName evidence="1">Chaperone protein DnaK</fullName>
    </recommendedName>
    <alternativeName>
        <fullName evidence="1">HSP70</fullName>
    </alternativeName>
    <alternativeName>
        <fullName evidence="1">Heat shock 70 kDa protein</fullName>
    </alternativeName>
    <alternativeName>
        <fullName evidence="1">Heat shock protein 70</fullName>
    </alternativeName>
</protein>
<gene>
    <name evidence="1" type="primary">dnaK</name>
    <name type="ordered locus">Emin_0100</name>
</gene>
<reference key="1">
    <citation type="journal article" date="2009" name="Appl. Environ. Microbiol.">
        <title>Genomic analysis of 'Elusimicrobium minutum,' the first cultivated representative of the phylum 'Elusimicrobia' (formerly termite group 1).</title>
        <authorList>
            <person name="Herlemann D.P.R."/>
            <person name="Geissinger O."/>
            <person name="Ikeda-Ohtsubo W."/>
            <person name="Kunin V."/>
            <person name="Sun H."/>
            <person name="Lapidus A."/>
            <person name="Hugenholtz P."/>
            <person name="Brune A."/>
        </authorList>
    </citation>
    <scope>NUCLEOTIDE SEQUENCE [LARGE SCALE GENOMIC DNA]</scope>
    <source>
        <strain>Pei191</strain>
    </source>
</reference>
<comment type="function">
    <text evidence="1">Acts as a chaperone.</text>
</comment>
<comment type="induction">
    <text evidence="1">By stress conditions e.g. heat shock.</text>
</comment>
<comment type="similarity">
    <text evidence="1">Belongs to the heat shock protein 70 family.</text>
</comment>
<name>DNAK_ELUMP</name>
<feature type="chain" id="PRO_1000119703" description="Chaperone protein DnaK">
    <location>
        <begin position="1"/>
        <end position="619"/>
    </location>
</feature>
<feature type="region of interest" description="Disordered" evidence="2">
    <location>
        <begin position="584"/>
        <end position="619"/>
    </location>
</feature>
<feature type="compositionally biased region" description="Low complexity" evidence="2">
    <location>
        <begin position="585"/>
        <end position="605"/>
    </location>
</feature>
<feature type="compositionally biased region" description="Basic and acidic residues" evidence="2">
    <location>
        <begin position="606"/>
        <end position="619"/>
    </location>
</feature>
<feature type="modified residue" description="Phosphothreonine; by autocatalysis" evidence="1">
    <location>
        <position position="179"/>
    </location>
</feature>
<sequence>MARIIGIDLGTSNTAAAAMEGGRATIIPSAEGSSIGGKAFPSYVAFTKDGQRLVGEPARRQAIANPEGTVTAFKRRMGEDYKFTLRGQEFTPQQLSAFVLQKVKKDAEAFLGEPVEKAVITVPAYFNDNQRQATKDAGRIAGLEVVRLVNEPTAAALAYGIDKAGKEQKIMVFDLGGGTLDVTIMEMGKEGTFDVLSTSGDTKLGGTDMDNAIIEWMVSEFKKSTGIDLSADKQAAQRLKDAAEKAKIELSTTMETDINLPFISAGADGPKHLELKLSRAKLESLVDSIVKRCGASIDQALNDSSLKSTEIDKIILVGGPTRMPIVQKYVEDHAGKKIERGIDPMECVATGAAVQAGILTGDVKDVLLLDVTPLSLGLETLGGVTTRLIERNTTIPVRKTQVFSTASDNQPAVTINVLQGERPMAKDNVPLGKFDLDGIPPAPRGVPQIEVTFDIDANGILNVSAKDLGTNKQQHITITSKTKLSDDEVQKFVKEAEKFADEDKKTKERVDAKNEADSVLFQTEKALKEHGDKVPQEDRLNIDRALGDLKEALKGDDVERIKKAKDDALAASQKLGEIIYKESQAKAQGAAGPQPGAQAQGQPNDGGKEDVVEAEVVDK</sequence>
<proteinExistence type="inferred from homology"/>